<comment type="function">
    <text evidence="1">Catalyzes the acyloin condensation reaction between C atoms 2 and 3 of pyruvate and glyceraldehyde 3-phosphate to yield 1-deoxy-D-xylulose-5-phosphate (DXP).</text>
</comment>
<comment type="catalytic activity">
    <reaction evidence="1">
        <text>D-glyceraldehyde 3-phosphate + pyruvate + H(+) = 1-deoxy-D-xylulose 5-phosphate + CO2</text>
        <dbReference type="Rhea" id="RHEA:12605"/>
        <dbReference type="ChEBI" id="CHEBI:15361"/>
        <dbReference type="ChEBI" id="CHEBI:15378"/>
        <dbReference type="ChEBI" id="CHEBI:16526"/>
        <dbReference type="ChEBI" id="CHEBI:57792"/>
        <dbReference type="ChEBI" id="CHEBI:59776"/>
        <dbReference type="EC" id="2.2.1.7"/>
    </reaction>
</comment>
<comment type="cofactor">
    <cofactor evidence="1">
        <name>Mg(2+)</name>
        <dbReference type="ChEBI" id="CHEBI:18420"/>
    </cofactor>
    <text evidence="1">Binds 1 Mg(2+) ion per subunit.</text>
</comment>
<comment type="cofactor">
    <cofactor evidence="1">
        <name>thiamine diphosphate</name>
        <dbReference type="ChEBI" id="CHEBI:58937"/>
    </cofactor>
    <text evidence="1">Binds 1 thiamine pyrophosphate per subunit.</text>
</comment>
<comment type="pathway">
    <text evidence="1">Metabolic intermediate biosynthesis; 1-deoxy-D-xylulose 5-phosphate biosynthesis; 1-deoxy-D-xylulose 5-phosphate from D-glyceraldehyde 3-phosphate and pyruvate: step 1/1.</text>
</comment>
<comment type="subunit">
    <text evidence="1">Homodimer.</text>
</comment>
<comment type="similarity">
    <text evidence="1">Belongs to the transketolase family. DXPS subfamily.</text>
</comment>
<gene>
    <name evidence="1" type="primary">dxs</name>
    <name type="ordered locus">BCG9842_B0947</name>
</gene>
<accession>B7IXG8</accession>
<evidence type="ECO:0000255" key="1">
    <source>
        <dbReference type="HAMAP-Rule" id="MF_00315"/>
    </source>
</evidence>
<organism>
    <name type="scientific">Bacillus cereus (strain G9842)</name>
    <dbReference type="NCBI Taxonomy" id="405531"/>
    <lineage>
        <taxon>Bacteria</taxon>
        <taxon>Bacillati</taxon>
        <taxon>Bacillota</taxon>
        <taxon>Bacilli</taxon>
        <taxon>Bacillales</taxon>
        <taxon>Bacillaceae</taxon>
        <taxon>Bacillus</taxon>
        <taxon>Bacillus cereus group</taxon>
    </lineage>
</organism>
<sequence>MDLTQIQNPSFLKDMSISELEGLSEDIRKFLIEELSQTGGHIAPNLGVVELTIALHKLFDSPQDKFLWDVGHQSYVHKILTGRAKEFGTLRQYQGLCGFPKRCESEHDVWETGHSSTSLSAAMGMALARDLKKTKEYVIPIIGDGALTGGMALEALNHIGHEKTDMIVILNDNEMSIAPNVGALHNVLGRLRTAGKYHWVKDELEYILKKIPAVGGKVAATAEKIKDSLKYLLVSGVFFEELGFTYLGPVDGHDYEKLFETLQYAKKTKGPVLVHVITKKGKGYKPAESDVIGTWHGTGPYKIESGDFVKPKEVAPAWSAVVSETVLKLARADERIVAITPAMPVGSKLEKFQKEFPNRMIDVGIAEQHATTMAAGMATQGMKPFLAIYSTFLQRAYDQVVHDICRQNLNVFIGIDRSGLVGADGETHQGVFDISFLRHLPNMVLMMPKDENEGQHLVYTAMQYEDGPIALRYARGNGLGVHMDEELKAIPIGTWETLKEGTQAAILTFGTTIPMAMEAAERLEKAGVSVKVVNARFIKPMDEAYLHDLLGKNIPILTIEEACLIGGFGTGVVEFASENGYHSALVERMGIPDRFIEHGSVTKLLEEIGLTTDAVVDRIHTMIPSKQKRA</sequence>
<proteinExistence type="inferred from homology"/>
<reference key="1">
    <citation type="submission" date="2008-10" db="EMBL/GenBank/DDBJ databases">
        <title>Genome sequence of Bacillus cereus G9842.</title>
        <authorList>
            <person name="Dodson R.J."/>
            <person name="Durkin A.S."/>
            <person name="Rosovitz M.J."/>
            <person name="Rasko D.A."/>
            <person name="Hoffmaster A."/>
            <person name="Ravel J."/>
            <person name="Sutton G."/>
        </authorList>
    </citation>
    <scope>NUCLEOTIDE SEQUENCE [LARGE SCALE GENOMIC DNA]</scope>
    <source>
        <strain>G9842</strain>
    </source>
</reference>
<feature type="chain" id="PRO_1000119538" description="1-deoxy-D-xylulose-5-phosphate synthase">
    <location>
        <begin position="1"/>
        <end position="630"/>
    </location>
</feature>
<feature type="binding site" evidence="1">
    <location>
        <position position="72"/>
    </location>
    <ligand>
        <name>thiamine diphosphate</name>
        <dbReference type="ChEBI" id="CHEBI:58937"/>
    </ligand>
</feature>
<feature type="binding site" evidence="1">
    <location>
        <begin position="113"/>
        <end position="115"/>
    </location>
    <ligand>
        <name>thiamine diphosphate</name>
        <dbReference type="ChEBI" id="CHEBI:58937"/>
    </ligand>
</feature>
<feature type="binding site" evidence="1">
    <location>
        <position position="144"/>
    </location>
    <ligand>
        <name>Mg(2+)</name>
        <dbReference type="ChEBI" id="CHEBI:18420"/>
    </ligand>
</feature>
<feature type="binding site" evidence="1">
    <location>
        <begin position="145"/>
        <end position="146"/>
    </location>
    <ligand>
        <name>thiamine diphosphate</name>
        <dbReference type="ChEBI" id="CHEBI:58937"/>
    </ligand>
</feature>
<feature type="binding site" evidence="1">
    <location>
        <position position="173"/>
    </location>
    <ligand>
        <name>Mg(2+)</name>
        <dbReference type="ChEBI" id="CHEBI:18420"/>
    </ligand>
</feature>
<feature type="binding site" evidence="1">
    <location>
        <position position="173"/>
    </location>
    <ligand>
        <name>thiamine diphosphate</name>
        <dbReference type="ChEBI" id="CHEBI:58937"/>
    </ligand>
</feature>
<feature type="binding site" evidence="1">
    <location>
        <position position="284"/>
    </location>
    <ligand>
        <name>thiamine diphosphate</name>
        <dbReference type="ChEBI" id="CHEBI:58937"/>
    </ligand>
</feature>
<feature type="binding site" evidence="1">
    <location>
        <position position="367"/>
    </location>
    <ligand>
        <name>thiamine diphosphate</name>
        <dbReference type="ChEBI" id="CHEBI:58937"/>
    </ligand>
</feature>
<name>DXS_BACC2</name>
<keyword id="KW-0414">Isoprene biosynthesis</keyword>
<keyword id="KW-0460">Magnesium</keyword>
<keyword id="KW-0479">Metal-binding</keyword>
<keyword id="KW-0784">Thiamine biosynthesis</keyword>
<keyword id="KW-0786">Thiamine pyrophosphate</keyword>
<keyword id="KW-0808">Transferase</keyword>
<protein>
    <recommendedName>
        <fullName evidence="1">1-deoxy-D-xylulose-5-phosphate synthase</fullName>
        <ecNumber evidence="1">2.2.1.7</ecNumber>
    </recommendedName>
    <alternativeName>
        <fullName evidence="1">1-deoxyxylulose-5-phosphate synthase</fullName>
        <shortName evidence="1">DXP synthase</shortName>
        <shortName evidence="1">DXPS</shortName>
    </alternativeName>
</protein>
<dbReference type="EC" id="2.2.1.7" evidence="1"/>
<dbReference type="EMBL" id="CP001186">
    <property type="protein sequence ID" value="ACK95491.1"/>
    <property type="molecule type" value="Genomic_DNA"/>
</dbReference>
<dbReference type="RefSeq" id="WP_000366457.1">
    <property type="nucleotide sequence ID" value="NC_011772.1"/>
</dbReference>
<dbReference type="SMR" id="B7IXG8"/>
<dbReference type="KEGG" id="bcg:BCG9842_B0947"/>
<dbReference type="HOGENOM" id="CLU_009227_1_4_9"/>
<dbReference type="UniPathway" id="UPA00064">
    <property type="reaction ID" value="UER00091"/>
</dbReference>
<dbReference type="Proteomes" id="UP000006744">
    <property type="component" value="Chromosome"/>
</dbReference>
<dbReference type="GO" id="GO:0005829">
    <property type="term" value="C:cytosol"/>
    <property type="evidence" value="ECO:0007669"/>
    <property type="project" value="TreeGrafter"/>
</dbReference>
<dbReference type="GO" id="GO:0008661">
    <property type="term" value="F:1-deoxy-D-xylulose-5-phosphate synthase activity"/>
    <property type="evidence" value="ECO:0007669"/>
    <property type="project" value="UniProtKB-UniRule"/>
</dbReference>
<dbReference type="GO" id="GO:0000287">
    <property type="term" value="F:magnesium ion binding"/>
    <property type="evidence" value="ECO:0007669"/>
    <property type="project" value="UniProtKB-UniRule"/>
</dbReference>
<dbReference type="GO" id="GO:0030976">
    <property type="term" value="F:thiamine pyrophosphate binding"/>
    <property type="evidence" value="ECO:0007669"/>
    <property type="project" value="UniProtKB-UniRule"/>
</dbReference>
<dbReference type="GO" id="GO:0052865">
    <property type="term" value="P:1-deoxy-D-xylulose 5-phosphate biosynthetic process"/>
    <property type="evidence" value="ECO:0007669"/>
    <property type="project" value="UniProtKB-UniPathway"/>
</dbReference>
<dbReference type="GO" id="GO:0019288">
    <property type="term" value="P:isopentenyl diphosphate biosynthetic process, methylerythritol 4-phosphate pathway"/>
    <property type="evidence" value="ECO:0007669"/>
    <property type="project" value="TreeGrafter"/>
</dbReference>
<dbReference type="GO" id="GO:0016114">
    <property type="term" value="P:terpenoid biosynthetic process"/>
    <property type="evidence" value="ECO:0007669"/>
    <property type="project" value="UniProtKB-UniRule"/>
</dbReference>
<dbReference type="GO" id="GO:0009228">
    <property type="term" value="P:thiamine biosynthetic process"/>
    <property type="evidence" value="ECO:0007669"/>
    <property type="project" value="UniProtKB-UniRule"/>
</dbReference>
<dbReference type="CDD" id="cd02007">
    <property type="entry name" value="TPP_DXS"/>
    <property type="match status" value="1"/>
</dbReference>
<dbReference type="CDD" id="cd07033">
    <property type="entry name" value="TPP_PYR_DXS_TK_like"/>
    <property type="match status" value="1"/>
</dbReference>
<dbReference type="FunFam" id="3.40.50.920:FF:000002">
    <property type="entry name" value="1-deoxy-D-xylulose-5-phosphate synthase"/>
    <property type="match status" value="1"/>
</dbReference>
<dbReference type="FunFam" id="3.40.50.970:FF:000030">
    <property type="entry name" value="1-deoxy-D-xylulose-5-phosphate synthase"/>
    <property type="match status" value="1"/>
</dbReference>
<dbReference type="Gene3D" id="3.40.50.920">
    <property type="match status" value="1"/>
</dbReference>
<dbReference type="Gene3D" id="3.40.50.970">
    <property type="match status" value="2"/>
</dbReference>
<dbReference type="HAMAP" id="MF_00315">
    <property type="entry name" value="DXP_synth"/>
    <property type="match status" value="1"/>
</dbReference>
<dbReference type="InterPro" id="IPR005477">
    <property type="entry name" value="Dxylulose-5-P_synthase"/>
</dbReference>
<dbReference type="InterPro" id="IPR029061">
    <property type="entry name" value="THDP-binding"/>
</dbReference>
<dbReference type="InterPro" id="IPR009014">
    <property type="entry name" value="Transketo_C/PFOR_II"/>
</dbReference>
<dbReference type="InterPro" id="IPR005475">
    <property type="entry name" value="Transketolase-like_Pyr-bd"/>
</dbReference>
<dbReference type="InterPro" id="IPR020826">
    <property type="entry name" value="Transketolase_BS"/>
</dbReference>
<dbReference type="InterPro" id="IPR033248">
    <property type="entry name" value="Transketolase_C"/>
</dbReference>
<dbReference type="InterPro" id="IPR049557">
    <property type="entry name" value="Transketolase_CS"/>
</dbReference>
<dbReference type="NCBIfam" id="TIGR00204">
    <property type="entry name" value="dxs"/>
    <property type="match status" value="1"/>
</dbReference>
<dbReference type="NCBIfam" id="NF003933">
    <property type="entry name" value="PRK05444.2-2"/>
    <property type="match status" value="1"/>
</dbReference>
<dbReference type="PANTHER" id="PTHR43322">
    <property type="entry name" value="1-D-DEOXYXYLULOSE 5-PHOSPHATE SYNTHASE-RELATED"/>
    <property type="match status" value="1"/>
</dbReference>
<dbReference type="PANTHER" id="PTHR43322:SF5">
    <property type="entry name" value="1-DEOXY-D-XYLULOSE-5-PHOSPHATE SYNTHASE, CHLOROPLASTIC"/>
    <property type="match status" value="1"/>
</dbReference>
<dbReference type="Pfam" id="PF13292">
    <property type="entry name" value="DXP_synthase_N"/>
    <property type="match status" value="1"/>
</dbReference>
<dbReference type="Pfam" id="PF02779">
    <property type="entry name" value="Transket_pyr"/>
    <property type="match status" value="1"/>
</dbReference>
<dbReference type="Pfam" id="PF02780">
    <property type="entry name" value="Transketolase_C"/>
    <property type="match status" value="1"/>
</dbReference>
<dbReference type="SMART" id="SM00861">
    <property type="entry name" value="Transket_pyr"/>
    <property type="match status" value="1"/>
</dbReference>
<dbReference type="SUPFAM" id="SSF52518">
    <property type="entry name" value="Thiamin diphosphate-binding fold (THDP-binding)"/>
    <property type="match status" value="2"/>
</dbReference>
<dbReference type="SUPFAM" id="SSF52922">
    <property type="entry name" value="TK C-terminal domain-like"/>
    <property type="match status" value="1"/>
</dbReference>
<dbReference type="PROSITE" id="PS00801">
    <property type="entry name" value="TRANSKETOLASE_1"/>
    <property type="match status" value="1"/>
</dbReference>
<dbReference type="PROSITE" id="PS00802">
    <property type="entry name" value="TRANSKETOLASE_2"/>
    <property type="match status" value="1"/>
</dbReference>